<protein>
    <recommendedName>
        <fullName evidence="7">Peroxisome assembly protein 10-A</fullName>
        <ecNumber evidence="2">2.3.2.27</ecNumber>
    </recommendedName>
    <alternativeName>
        <fullName evidence="7">Peroxin-10-A</fullName>
    </alternativeName>
</protein>
<sequence>MALSCANRPQLIRSSQKDEQFQGSLRGQAHEVCQAFAGAKKWLQWRKEIELFFDLAYYCLTTFSGYQTLGEEYVNIVQVDSSKRKVPSLFQRAALICCHTLLPYLLDKEFVRLEHELHIETDGVRLSHSGLSSGSHRRSWMWKRVHRKIAALSEQQKKTLIKAVYIVRQSIAFLRRLHLAIFYMNGAFYHLAKRFTGINYLRVRRSAGDDQIVNRSYTLLGAVSLFHLLLLLWVQLNSFQQRQEAQQKWKLLRRMSYQRAPPHEKSYKRRAKCTLCLEVRRHCTATPCGHLFCWECIMEWCNTKAECPLCREKCSAQKLVYLRHYR</sequence>
<proteinExistence type="inferred from homology"/>
<organism>
    <name type="scientific">Xenopus laevis</name>
    <name type="common">African clawed frog</name>
    <dbReference type="NCBI Taxonomy" id="8355"/>
    <lineage>
        <taxon>Eukaryota</taxon>
        <taxon>Metazoa</taxon>
        <taxon>Chordata</taxon>
        <taxon>Craniata</taxon>
        <taxon>Vertebrata</taxon>
        <taxon>Euteleostomi</taxon>
        <taxon>Amphibia</taxon>
        <taxon>Batrachia</taxon>
        <taxon>Anura</taxon>
        <taxon>Pipoidea</taxon>
        <taxon>Pipidae</taxon>
        <taxon>Xenopodinae</taxon>
        <taxon>Xenopus</taxon>
        <taxon>Xenopus</taxon>
    </lineage>
</organism>
<comment type="function">
    <text evidence="2 3 6">E3 ubiquitin-protein ligase component of a retrotranslocation channel required for peroxisome organization by mediating export of the PEX5 receptor from peroxisomes to the cytosol, thereby promoting PEX5 recycling (PubMed:35931083). The retrotranslocation channel is composed of PEX2, PEX10 and PEX12; each subunit contributing transmembrane segments that coassemble into an open channel that specifically allows the passage of PEX5 through the peroxisomal membrane (By similarity). PEX10 also regulates PEX5 recycling by acting as a E3 ubiquitin-protein ligase (By similarity). When PEX5 recycling is compromised, PEX10 catalyzes polyubiquitination of PEX5 during its passage through the retrotranslocation channel, leading to its degradation (By similarity).</text>
</comment>
<comment type="catalytic activity">
    <reaction evidence="2">
        <text>S-ubiquitinyl-[E2 ubiquitin-conjugating enzyme]-L-cysteine + [acceptor protein]-L-lysine = [E2 ubiquitin-conjugating enzyme]-L-cysteine + N(6)-ubiquitinyl-[acceptor protein]-L-lysine.</text>
        <dbReference type="EC" id="2.3.2.27"/>
    </reaction>
</comment>
<comment type="activity regulation">
    <text evidence="2">The E3 ubiquitin-protein ligase activity is stimulated by PEX12.</text>
</comment>
<comment type="pathway">
    <text evidence="2">Protein modification; protein ubiquitination.</text>
</comment>
<comment type="subunit">
    <text evidence="2">Component of the PEX2-PEX10-PEX12 retrotranslocation channel.</text>
</comment>
<comment type="subcellular location">
    <subcellularLocation>
        <location evidence="2">Peroxisome membrane</location>
        <topology evidence="4">Multi-pass membrane protein</topology>
    </subcellularLocation>
</comment>
<comment type="domain">
    <text evidence="1">The three subunits of the retrotranslocation channel (PEX2, PEX10 and PEX12) coassemble in the membrane into a channel with an open 10 Angstrom pore. The RING-type zinc-fingers that catalyze PEX5 receptor ubiquitination are positioned above the pore on the cytosolic side of the complex.</text>
</comment>
<comment type="similarity">
    <text evidence="7">Belongs to the pex2/pex10/pex12 family.</text>
</comment>
<feature type="chain" id="PRO_0000456986" description="Peroxisome assembly protein 10-A">
    <location>
        <begin position="1"/>
        <end position="326"/>
    </location>
</feature>
<feature type="topological domain" description="Peroxisomal matrix" evidence="1">
    <location>
        <begin position="1"/>
        <end position="7"/>
    </location>
</feature>
<feature type="transmembrane region" description="Helical; Name=TM1" evidence="1">
    <location>
        <begin position="8"/>
        <end position="37"/>
    </location>
</feature>
<feature type="topological domain" description="Cytoplasmic" evidence="1">
    <location>
        <position position="38"/>
    </location>
</feature>
<feature type="transmembrane region" description="Helical; Name=TM2" evidence="1">
    <location>
        <begin position="39"/>
        <end position="60"/>
    </location>
</feature>
<feature type="topological domain" description="Peroxisomal matrix" evidence="1">
    <location>
        <begin position="61"/>
        <end position="89"/>
    </location>
</feature>
<feature type="transmembrane region" description="Helical; Name=TM3" evidence="1">
    <location>
        <begin position="90"/>
        <end position="122"/>
    </location>
</feature>
<feature type="topological domain" description="Cytoplasmic" evidence="1">
    <location>
        <begin position="123"/>
        <end position="147"/>
    </location>
</feature>
<feature type="transmembrane region" description="Helical; Name=TM4" evidence="1">
    <location>
        <begin position="148"/>
        <end position="185"/>
    </location>
</feature>
<feature type="topological domain" description="Peroxisomal matrix" evidence="1">
    <location>
        <begin position="186"/>
        <end position="216"/>
    </location>
</feature>
<feature type="transmembrane region" description="Helical; Name=TM5" evidence="1">
    <location>
        <begin position="217"/>
        <end position="236"/>
    </location>
</feature>
<feature type="topological domain" description="Cytoplasmic" evidence="1">
    <location>
        <begin position="237"/>
        <end position="326"/>
    </location>
</feature>
<feature type="zinc finger region" description="RING-type" evidence="5">
    <location>
        <begin position="273"/>
        <end position="311"/>
    </location>
</feature>
<feature type="binding site" evidence="1">
    <location>
        <position position="273"/>
    </location>
    <ligand>
        <name>Zn(2+)</name>
        <dbReference type="ChEBI" id="CHEBI:29105"/>
        <label>1</label>
    </ligand>
</feature>
<feature type="binding site" evidence="1">
    <location>
        <position position="276"/>
    </location>
    <ligand>
        <name>Zn(2+)</name>
        <dbReference type="ChEBI" id="CHEBI:29105"/>
        <label>1</label>
    </ligand>
</feature>
<feature type="binding site" evidence="1">
    <location>
        <position position="288"/>
    </location>
    <ligand>
        <name>Zn(2+)</name>
        <dbReference type="ChEBI" id="CHEBI:29105"/>
        <label>2</label>
    </ligand>
</feature>
<feature type="binding site" evidence="1">
    <location>
        <position position="290"/>
    </location>
    <ligand>
        <name>Zn(2+)</name>
        <dbReference type="ChEBI" id="CHEBI:29105"/>
        <label>2</label>
    </ligand>
</feature>
<feature type="binding site" evidence="1">
    <location>
        <position position="293"/>
    </location>
    <ligand>
        <name>Zn(2+)</name>
        <dbReference type="ChEBI" id="CHEBI:29105"/>
        <label>1</label>
    </ligand>
</feature>
<feature type="binding site" evidence="1">
    <location>
        <position position="296"/>
    </location>
    <ligand>
        <name>Zn(2+)</name>
        <dbReference type="ChEBI" id="CHEBI:29105"/>
        <label>1</label>
    </ligand>
</feature>
<feature type="binding site" evidence="1">
    <location>
        <position position="307"/>
    </location>
    <ligand>
        <name>Zn(2+)</name>
        <dbReference type="ChEBI" id="CHEBI:29105"/>
        <label>2</label>
    </ligand>
</feature>
<feature type="binding site" evidence="1">
    <location>
        <position position="310"/>
    </location>
    <ligand>
        <name>Zn(2+)</name>
        <dbReference type="ChEBI" id="CHEBI:29105"/>
        <label>2</label>
    </ligand>
</feature>
<gene>
    <name evidence="8" type="primary">pex10.S</name>
</gene>
<keyword id="KW-0472">Membrane</keyword>
<keyword id="KW-0479">Metal-binding</keyword>
<keyword id="KW-0576">Peroxisome</keyword>
<keyword id="KW-0962">Peroxisome biogenesis</keyword>
<keyword id="KW-0653">Protein transport</keyword>
<keyword id="KW-1185">Reference proteome</keyword>
<keyword id="KW-0808">Transferase</keyword>
<keyword id="KW-0812">Transmembrane</keyword>
<keyword id="KW-1133">Transmembrane helix</keyword>
<keyword id="KW-0813">Transport</keyword>
<keyword id="KW-0833">Ubl conjugation pathway</keyword>
<keyword id="KW-0862">Zinc</keyword>
<keyword id="KW-0863">Zinc-finger</keyword>
<accession>A0A1L8FG46</accession>
<evidence type="ECO:0000250" key="1">
    <source>
        <dbReference type="UniProtKB" id="G2Q0E2"/>
    </source>
</evidence>
<evidence type="ECO:0000250" key="2">
    <source>
        <dbReference type="UniProtKB" id="O60683"/>
    </source>
</evidence>
<evidence type="ECO:0000250" key="3">
    <source>
        <dbReference type="UniProtKB" id="Q05568"/>
    </source>
</evidence>
<evidence type="ECO:0000255" key="4"/>
<evidence type="ECO:0000255" key="5">
    <source>
        <dbReference type="PROSITE-ProRule" id="PRU00175"/>
    </source>
</evidence>
<evidence type="ECO:0000269" key="6">
    <source>
    </source>
</evidence>
<evidence type="ECO:0000305" key="7"/>
<evidence type="ECO:0000312" key="8">
    <source>
        <dbReference type="Xenbase" id="XB-GENE-17344799"/>
    </source>
</evidence>
<name>PX10A_XENLA</name>
<reference key="1">
    <citation type="journal article" date="2016" name="Nature">
        <title>Genome evolution in the allotetraploid frog Xenopus laevis.</title>
        <authorList>
            <person name="Session A.M."/>
            <person name="Uno Y."/>
            <person name="Kwon T."/>
            <person name="Chapman J.A."/>
            <person name="Toyoda A."/>
            <person name="Takahashi S."/>
            <person name="Fukui A."/>
            <person name="Hikosaka A."/>
            <person name="Suzuki A."/>
            <person name="Kondo M."/>
            <person name="van Heeringen S.J."/>
            <person name="Quigley I."/>
            <person name="Heinz S."/>
            <person name="Ogino H."/>
            <person name="Ochi H."/>
            <person name="Hellsten U."/>
            <person name="Lyons J.B."/>
            <person name="Simakov O."/>
            <person name="Putnam N."/>
            <person name="Stites J."/>
            <person name="Kuroki Y."/>
            <person name="Tanaka T."/>
            <person name="Michiue T."/>
            <person name="Watanabe M."/>
            <person name="Bogdanovic O."/>
            <person name="Lister R."/>
            <person name="Georgiou G."/>
            <person name="Paranjpe S.S."/>
            <person name="van Kruijsbergen I."/>
            <person name="Shu S."/>
            <person name="Carlson J."/>
            <person name="Kinoshita T."/>
            <person name="Ohta Y."/>
            <person name="Mawaribuchi S."/>
            <person name="Jenkins J."/>
            <person name="Grimwood J."/>
            <person name="Schmutz J."/>
            <person name="Mitros T."/>
            <person name="Mozaffari S.V."/>
            <person name="Suzuki Y."/>
            <person name="Haramoto Y."/>
            <person name="Yamamoto T.S."/>
            <person name="Takagi C."/>
            <person name="Heald R."/>
            <person name="Miller K."/>
            <person name="Haudenschild C."/>
            <person name="Kitzman J."/>
            <person name="Nakayama T."/>
            <person name="Izutsu Y."/>
            <person name="Robert J."/>
            <person name="Fortriede J."/>
            <person name="Burns K."/>
            <person name="Lotay V."/>
            <person name="Karimi K."/>
            <person name="Yasuoka Y."/>
            <person name="Dichmann D.S."/>
            <person name="Flajnik M.F."/>
            <person name="Houston D.W."/>
            <person name="Shendure J."/>
            <person name="DuPasquier L."/>
            <person name="Vize P.D."/>
            <person name="Zorn A.M."/>
            <person name="Ito M."/>
            <person name="Marcotte E.M."/>
            <person name="Wallingford J.B."/>
            <person name="Ito Y."/>
            <person name="Asashima M."/>
            <person name="Ueno N."/>
            <person name="Matsuda Y."/>
            <person name="Veenstra G.J."/>
            <person name="Fujiyama A."/>
            <person name="Harland R.M."/>
            <person name="Taira M."/>
            <person name="Rokhsar D.S."/>
        </authorList>
    </citation>
    <scope>NUCLEOTIDE SEQUENCE [LARGE SCALE GENOMIC DNA]</scope>
    <source>
        <strain>J</strain>
    </source>
</reference>
<reference key="2">
    <citation type="journal article" date="2022" name="Mol. Cell">
        <title>PEX5 translocation into and out of peroxisomes drives matrix protein import.</title>
        <authorList>
            <person name="Skowyra M.L."/>
            <person name="Rapoport T.A."/>
        </authorList>
    </citation>
    <scope>FUNCTION</scope>
</reference>
<dbReference type="EC" id="2.3.2.27" evidence="2"/>
<dbReference type="RefSeq" id="XP_018083342.1">
    <property type="nucleotide sequence ID" value="XM_018227853.2"/>
</dbReference>
<dbReference type="SMR" id="A0A1L8FG46"/>
<dbReference type="STRING" id="8355.A0A1L8FG46"/>
<dbReference type="PaxDb" id="8355-A0A1L8FG46"/>
<dbReference type="GeneID" id="108697631"/>
<dbReference type="KEGG" id="xla:108697631"/>
<dbReference type="AGR" id="Xenbase:XB-GENE-17344799"/>
<dbReference type="CTD" id="108697631"/>
<dbReference type="Xenbase" id="XB-GENE-17344799">
    <property type="gene designation" value="pex10.S"/>
</dbReference>
<dbReference type="OMA" id="REKSECP"/>
<dbReference type="OrthoDB" id="6270329at2759"/>
<dbReference type="UniPathway" id="UPA00143"/>
<dbReference type="Proteomes" id="UP000186698">
    <property type="component" value="Chromosome 7S"/>
</dbReference>
<dbReference type="GO" id="GO:0005778">
    <property type="term" value="C:peroxisomal membrane"/>
    <property type="evidence" value="ECO:0000318"/>
    <property type="project" value="GO_Central"/>
</dbReference>
<dbReference type="GO" id="GO:0016740">
    <property type="term" value="F:transferase activity"/>
    <property type="evidence" value="ECO:0007669"/>
    <property type="project" value="UniProtKB-KW"/>
</dbReference>
<dbReference type="GO" id="GO:0008270">
    <property type="term" value="F:zinc ion binding"/>
    <property type="evidence" value="ECO:0007669"/>
    <property type="project" value="UniProtKB-KW"/>
</dbReference>
<dbReference type="GO" id="GO:0016558">
    <property type="term" value="P:protein import into peroxisome matrix"/>
    <property type="evidence" value="ECO:0000318"/>
    <property type="project" value="GO_Central"/>
</dbReference>
<dbReference type="GO" id="GO:0016567">
    <property type="term" value="P:protein ubiquitination"/>
    <property type="evidence" value="ECO:0007669"/>
    <property type="project" value="UniProtKB-UniPathway"/>
</dbReference>
<dbReference type="CDD" id="cd16527">
    <property type="entry name" value="RING-HC_PEX10"/>
    <property type="match status" value="1"/>
</dbReference>
<dbReference type="FunFam" id="3.30.40.10:FF:000332">
    <property type="entry name" value="Peroxisome biogenesis factor 10"/>
    <property type="match status" value="1"/>
</dbReference>
<dbReference type="Gene3D" id="3.30.40.10">
    <property type="entry name" value="Zinc/RING finger domain, C3HC4 (zinc finger)"/>
    <property type="match status" value="1"/>
</dbReference>
<dbReference type="InterPro" id="IPR025654">
    <property type="entry name" value="PEX2/10"/>
</dbReference>
<dbReference type="InterPro" id="IPR006845">
    <property type="entry name" value="Pex_N"/>
</dbReference>
<dbReference type="InterPro" id="IPR001841">
    <property type="entry name" value="Znf_RING"/>
</dbReference>
<dbReference type="InterPro" id="IPR013083">
    <property type="entry name" value="Znf_RING/FYVE/PHD"/>
</dbReference>
<dbReference type="InterPro" id="IPR017907">
    <property type="entry name" value="Znf_RING_CS"/>
</dbReference>
<dbReference type="PANTHER" id="PTHR23350">
    <property type="entry name" value="PEROXISOME ASSEMBLY PROTEIN 10"/>
    <property type="match status" value="1"/>
</dbReference>
<dbReference type="PANTHER" id="PTHR23350:SF0">
    <property type="entry name" value="PEROXISOME BIOGENESIS FACTOR 10"/>
    <property type="match status" value="1"/>
</dbReference>
<dbReference type="Pfam" id="PF04757">
    <property type="entry name" value="Pex2_Pex12"/>
    <property type="match status" value="1"/>
</dbReference>
<dbReference type="Pfam" id="PF13639">
    <property type="entry name" value="zf-RING_2"/>
    <property type="match status" value="1"/>
</dbReference>
<dbReference type="SMART" id="SM00184">
    <property type="entry name" value="RING"/>
    <property type="match status" value="1"/>
</dbReference>
<dbReference type="SUPFAM" id="SSF57850">
    <property type="entry name" value="RING/U-box"/>
    <property type="match status" value="1"/>
</dbReference>
<dbReference type="PROSITE" id="PS00518">
    <property type="entry name" value="ZF_RING_1"/>
    <property type="match status" value="1"/>
</dbReference>
<dbReference type="PROSITE" id="PS50089">
    <property type="entry name" value="ZF_RING_2"/>
    <property type="match status" value="1"/>
</dbReference>